<comment type="function">
    <text evidence="1">Part of the Tol-Pal system, which plays a role in outer membrane invagination during cell division and is important for maintaining outer membrane integrity.</text>
</comment>
<comment type="subunit">
    <text evidence="1">The Tol-Pal system is composed of five core proteins: the inner membrane proteins TolA, TolQ and TolR, the periplasmic protein TolB and the outer membrane protein Pal. They form a network linking the inner and outer membranes and the peptidoglycan layer.</text>
</comment>
<comment type="subcellular location">
    <subcellularLocation>
        <location evidence="1 2">Periplasm</location>
    </subcellularLocation>
</comment>
<comment type="similarity">
    <text evidence="1 2">Belongs to the TolB family.</text>
</comment>
<name>TOLB_RICCN</name>
<accession>Q92IL4</accession>
<feature type="signal peptide" evidence="1">
    <location>
        <begin position="1"/>
        <end position="19"/>
    </location>
</feature>
<feature type="chain" id="PRO_0000034680" description="Tol-Pal system protein TolB" evidence="1">
    <location>
        <begin position="20"/>
        <end position="444"/>
    </location>
</feature>
<organism>
    <name type="scientific">Rickettsia conorii (strain ATCC VR-613 / Malish 7)</name>
    <dbReference type="NCBI Taxonomy" id="272944"/>
    <lineage>
        <taxon>Bacteria</taxon>
        <taxon>Pseudomonadati</taxon>
        <taxon>Pseudomonadota</taxon>
        <taxon>Alphaproteobacteria</taxon>
        <taxon>Rickettsiales</taxon>
        <taxon>Rickettsiaceae</taxon>
        <taxon>Rickettsieae</taxon>
        <taxon>Rickettsia</taxon>
        <taxon>spotted fever group</taxon>
    </lineage>
</organism>
<sequence length="444" mass="49080">MRNIIYFILSLLFSVTSYALETINIEHGRADPTPIAVNKFDADNSAADVLGHDMVKVISNDLKLSGLFRPISAASFIEEKTGIEYKPLFAAWRQINASLLVNGEVKKLESGKFKVSFILWDTLLEKQLAGEMLEVPKNLWRRAAHKIADKIYEKITGDAGYFDTKIVYVSESSSLPKIKRIALMDYDGANNKYLTNGKSLVLTPRFARSADKIFYVSYATKRRVLVYEKDLKTGKESVVGDFPGISFAPRFSPDGRKAVMSIAKNGSTHIYEIDLATKQLHKLTDGFGINTSPSYSPDGKKIVYNSDRNGVPQLYIMNSDGSDVQRISFGGGSYAAPSWSPRGDYIAFTKITKGDGGKTFNIGIMKACPQDDENSERIITSGYLVESPCWSPNGRVIMFAKGWPSSAKAPGKNKIFAIDLTGHNEREIMTPADASDPEWSGVLN</sequence>
<gene>
    <name evidence="1" type="primary">tolB</name>
    <name type="ordered locus">RC0406</name>
</gene>
<reference key="1">
    <citation type="journal article" date="2001" name="Science">
        <title>Mechanisms of evolution in Rickettsia conorii and R. prowazekii.</title>
        <authorList>
            <person name="Ogata H."/>
            <person name="Audic S."/>
            <person name="Renesto-Audiffren P."/>
            <person name="Fournier P.-E."/>
            <person name="Barbe V."/>
            <person name="Samson D."/>
            <person name="Roux V."/>
            <person name="Cossart P."/>
            <person name="Weissenbach J."/>
            <person name="Claverie J.-M."/>
            <person name="Raoult D."/>
        </authorList>
    </citation>
    <scope>NUCLEOTIDE SEQUENCE [LARGE SCALE GENOMIC DNA]</scope>
    <source>
        <strain>ATCC VR-613 / Malish 7</strain>
    </source>
</reference>
<dbReference type="EMBL" id="AE006914">
    <property type="protein sequence ID" value="AAL02944.1"/>
    <property type="molecule type" value="Genomic_DNA"/>
</dbReference>
<dbReference type="PIR" id="F97750">
    <property type="entry name" value="F97750"/>
</dbReference>
<dbReference type="RefSeq" id="WP_010977059.1">
    <property type="nucleotide sequence ID" value="NC_003103.1"/>
</dbReference>
<dbReference type="SMR" id="Q92IL4"/>
<dbReference type="GeneID" id="927556"/>
<dbReference type="KEGG" id="rco:RC0406"/>
<dbReference type="PATRIC" id="fig|272944.4.peg.461"/>
<dbReference type="HOGENOM" id="CLU_047123_0_0_5"/>
<dbReference type="Proteomes" id="UP000000816">
    <property type="component" value="Chromosome"/>
</dbReference>
<dbReference type="GO" id="GO:0042597">
    <property type="term" value="C:periplasmic space"/>
    <property type="evidence" value="ECO:0007669"/>
    <property type="project" value="UniProtKB-SubCell"/>
</dbReference>
<dbReference type="GO" id="GO:0051301">
    <property type="term" value="P:cell division"/>
    <property type="evidence" value="ECO:0007669"/>
    <property type="project" value="UniProtKB-UniRule"/>
</dbReference>
<dbReference type="GO" id="GO:0017038">
    <property type="term" value="P:protein import"/>
    <property type="evidence" value="ECO:0007669"/>
    <property type="project" value="InterPro"/>
</dbReference>
<dbReference type="Gene3D" id="2.120.10.30">
    <property type="entry name" value="TolB, C-terminal domain"/>
    <property type="match status" value="1"/>
</dbReference>
<dbReference type="Gene3D" id="3.40.50.10070">
    <property type="entry name" value="TolB, N-terminal domain"/>
    <property type="match status" value="1"/>
</dbReference>
<dbReference type="HAMAP" id="MF_00671">
    <property type="entry name" value="TolB"/>
    <property type="match status" value="1"/>
</dbReference>
<dbReference type="InterPro" id="IPR011042">
    <property type="entry name" value="6-blade_b-propeller_TolB-like"/>
</dbReference>
<dbReference type="InterPro" id="IPR011659">
    <property type="entry name" value="PD40"/>
</dbReference>
<dbReference type="InterPro" id="IPR014167">
    <property type="entry name" value="Tol-Pal_TolB"/>
</dbReference>
<dbReference type="InterPro" id="IPR007195">
    <property type="entry name" value="TolB_N"/>
</dbReference>
<dbReference type="NCBIfam" id="TIGR02800">
    <property type="entry name" value="propeller_TolB"/>
    <property type="match status" value="1"/>
</dbReference>
<dbReference type="PANTHER" id="PTHR36842:SF1">
    <property type="entry name" value="PROTEIN TOLB"/>
    <property type="match status" value="1"/>
</dbReference>
<dbReference type="PANTHER" id="PTHR36842">
    <property type="entry name" value="PROTEIN TOLB HOMOLOG"/>
    <property type="match status" value="1"/>
</dbReference>
<dbReference type="Pfam" id="PF07676">
    <property type="entry name" value="PD40"/>
    <property type="match status" value="4"/>
</dbReference>
<dbReference type="Pfam" id="PF04052">
    <property type="entry name" value="TolB_N"/>
    <property type="match status" value="1"/>
</dbReference>
<dbReference type="SUPFAM" id="SSF52964">
    <property type="entry name" value="TolB, N-terminal domain"/>
    <property type="match status" value="1"/>
</dbReference>
<dbReference type="SUPFAM" id="SSF69304">
    <property type="entry name" value="Tricorn protease N-terminal domain"/>
    <property type="match status" value="1"/>
</dbReference>
<evidence type="ECO:0000255" key="1">
    <source>
        <dbReference type="HAMAP-Rule" id="MF_00671"/>
    </source>
</evidence>
<evidence type="ECO:0000305" key="2"/>
<keyword id="KW-0131">Cell cycle</keyword>
<keyword id="KW-0132">Cell division</keyword>
<keyword id="KW-0574">Periplasm</keyword>
<keyword id="KW-0732">Signal</keyword>
<proteinExistence type="inferred from homology"/>
<protein>
    <recommendedName>
        <fullName evidence="1">Tol-Pal system protein TolB</fullName>
    </recommendedName>
</protein>